<proteinExistence type="inferred from homology"/>
<gene>
    <name evidence="2" type="primary">cpfC</name>
    <name type="synonym">hemH</name>
    <name type="synonym">hemZ</name>
    <name type="ordered locus">MT1532</name>
</gene>
<dbReference type="EC" id="4.99.1.9" evidence="2"/>
<dbReference type="EMBL" id="AE000516">
    <property type="protein sequence ID" value="AAK45797.1"/>
    <property type="molecule type" value="Genomic_DNA"/>
</dbReference>
<dbReference type="PIR" id="H70710">
    <property type="entry name" value="H70710"/>
</dbReference>
<dbReference type="RefSeq" id="WP_003407559.1">
    <property type="nucleotide sequence ID" value="NZ_KK341227.1"/>
</dbReference>
<dbReference type="SMR" id="P9WNE2"/>
<dbReference type="KEGG" id="mtc:MT1532"/>
<dbReference type="PATRIC" id="fig|83331.31.peg.1647"/>
<dbReference type="HOGENOM" id="CLU_018884_2_0_11"/>
<dbReference type="UniPathway" id="UPA00252"/>
<dbReference type="Proteomes" id="UP000001020">
    <property type="component" value="Chromosome"/>
</dbReference>
<dbReference type="GO" id="GO:0005737">
    <property type="term" value="C:cytoplasm"/>
    <property type="evidence" value="ECO:0007669"/>
    <property type="project" value="UniProtKB-SubCell"/>
</dbReference>
<dbReference type="GO" id="GO:0051537">
    <property type="term" value="F:2 iron, 2 sulfur cluster binding"/>
    <property type="evidence" value="ECO:0007669"/>
    <property type="project" value="UniProtKB-KW"/>
</dbReference>
<dbReference type="GO" id="GO:0004325">
    <property type="term" value="F:ferrochelatase activity"/>
    <property type="evidence" value="ECO:0007669"/>
    <property type="project" value="UniProtKB-UniRule"/>
</dbReference>
<dbReference type="GO" id="GO:0046872">
    <property type="term" value="F:metal ion binding"/>
    <property type="evidence" value="ECO:0007669"/>
    <property type="project" value="UniProtKB-KW"/>
</dbReference>
<dbReference type="GO" id="GO:0006783">
    <property type="term" value="P:heme biosynthetic process"/>
    <property type="evidence" value="ECO:0007669"/>
    <property type="project" value="UniProtKB-UniRule"/>
</dbReference>
<dbReference type="CDD" id="cd00419">
    <property type="entry name" value="Ferrochelatase_C"/>
    <property type="match status" value="1"/>
</dbReference>
<dbReference type="CDD" id="cd03411">
    <property type="entry name" value="Ferrochelatase_N"/>
    <property type="match status" value="1"/>
</dbReference>
<dbReference type="FunFam" id="3.40.50.1400:FF:000007">
    <property type="entry name" value="Ferrochelatase"/>
    <property type="match status" value="1"/>
</dbReference>
<dbReference type="Gene3D" id="3.40.50.1400">
    <property type="match status" value="2"/>
</dbReference>
<dbReference type="HAMAP" id="MF_00323">
    <property type="entry name" value="Ferrochelatase"/>
    <property type="match status" value="1"/>
</dbReference>
<dbReference type="InterPro" id="IPR001015">
    <property type="entry name" value="Ferrochelatase"/>
</dbReference>
<dbReference type="InterPro" id="IPR019772">
    <property type="entry name" value="Ferrochelatase_AS"/>
</dbReference>
<dbReference type="InterPro" id="IPR033644">
    <property type="entry name" value="Ferrochelatase_C"/>
</dbReference>
<dbReference type="InterPro" id="IPR033659">
    <property type="entry name" value="Ferrochelatase_N"/>
</dbReference>
<dbReference type="NCBIfam" id="TIGR00109">
    <property type="entry name" value="hemH"/>
    <property type="match status" value="1"/>
</dbReference>
<dbReference type="NCBIfam" id="NF000689">
    <property type="entry name" value="PRK00035.2-1"/>
    <property type="match status" value="1"/>
</dbReference>
<dbReference type="PANTHER" id="PTHR11108">
    <property type="entry name" value="FERROCHELATASE"/>
    <property type="match status" value="1"/>
</dbReference>
<dbReference type="PANTHER" id="PTHR11108:SF1">
    <property type="entry name" value="FERROCHELATASE, MITOCHONDRIAL"/>
    <property type="match status" value="1"/>
</dbReference>
<dbReference type="Pfam" id="PF00762">
    <property type="entry name" value="Ferrochelatase"/>
    <property type="match status" value="1"/>
</dbReference>
<dbReference type="SUPFAM" id="SSF53800">
    <property type="entry name" value="Chelatase"/>
    <property type="match status" value="1"/>
</dbReference>
<dbReference type="PROSITE" id="PS00534">
    <property type="entry name" value="FERROCHELATASE"/>
    <property type="match status" value="1"/>
</dbReference>
<protein>
    <recommendedName>
        <fullName evidence="2">Coproporphyrin III ferrochelatase</fullName>
        <ecNumber evidence="2">4.99.1.9</ecNumber>
    </recommendedName>
</protein>
<reference key="1">
    <citation type="journal article" date="2002" name="J. Bacteriol.">
        <title>Whole-genome comparison of Mycobacterium tuberculosis clinical and laboratory strains.</title>
        <authorList>
            <person name="Fleischmann R.D."/>
            <person name="Alland D."/>
            <person name="Eisen J.A."/>
            <person name="Carpenter L."/>
            <person name="White O."/>
            <person name="Peterson J.D."/>
            <person name="DeBoy R.T."/>
            <person name="Dodson R.J."/>
            <person name="Gwinn M.L."/>
            <person name="Haft D.H."/>
            <person name="Hickey E.K."/>
            <person name="Kolonay J.F."/>
            <person name="Nelson W.C."/>
            <person name="Umayam L.A."/>
            <person name="Ermolaeva M.D."/>
            <person name="Salzberg S.L."/>
            <person name="Delcher A."/>
            <person name="Utterback T.R."/>
            <person name="Weidman J.F."/>
            <person name="Khouri H.M."/>
            <person name="Gill J."/>
            <person name="Mikula A."/>
            <person name="Bishai W."/>
            <person name="Jacobs W.R. Jr."/>
            <person name="Venter J.C."/>
            <person name="Fraser C.M."/>
        </authorList>
    </citation>
    <scope>NUCLEOTIDE SEQUENCE [LARGE SCALE GENOMIC DNA]</scope>
    <source>
        <strain>CDC 1551 / Oshkosh</strain>
    </source>
</reference>
<sequence length="344" mass="37144">MQFDAVLLLSFGGPEGPEQVRPFLENVTRGRGVPAERLDAVAEHYLHFGGVSPINGINRTLIAELEAQQELPVYFGNRNWEPYVEDAVTAMRDNGVRRAAVFATSAWSGYSSCTQYVEDIARARRAAGRDAPELVKLRPYFDHPLFVEMFADAITAAAATVRGDARLVFTAHSIPTAADRRCGPNLYSRQVAYATRLVAAAAGYCDFDLAWQSRSGPPQVPWLEPDVTDQLTGLAGAGINAVIVCPIGFVADHIEVVWDLDHELRLQAEAAGIAYARASTPNADPRFARLARGLIDELRYGRIPARVSGPDPVPGCLSSINGQPCRPPHCVASVSPARPSAGSP</sequence>
<keyword id="KW-0001">2Fe-2S</keyword>
<keyword id="KW-0963">Cytoplasm</keyword>
<keyword id="KW-0350">Heme biosynthesis</keyword>
<keyword id="KW-0408">Iron</keyword>
<keyword id="KW-0411">Iron-sulfur</keyword>
<keyword id="KW-0456">Lyase</keyword>
<keyword id="KW-0479">Metal-binding</keyword>
<keyword id="KW-0627">Porphyrin biosynthesis</keyword>
<keyword id="KW-1185">Reference proteome</keyword>
<comment type="function">
    <text evidence="2">Involved in coproporphyrin-dependent heme b biosynthesis. Catalyzes the insertion of ferrous iron into coproporphyrin III to form Fe-coproporphyrin III.</text>
</comment>
<comment type="catalytic activity">
    <reaction evidence="2">
        <text>Fe-coproporphyrin III + 2 H(+) = coproporphyrin III + Fe(2+)</text>
        <dbReference type="Rhea" id="RHEA:49572"/>
        <dbReference type="ChEBI" id="CHEBI:15378"/>
        <dbReference type="ChEBI" id="CHEBI:29033"/>
        <dbReference type="ChEBI" id="CHEBI:68438"/>
        <dbReference type="ChEBI" id="CHEBI:131725"/>
        <dbReference type="EC" id="4.99.1.9"/>
    </reaction>
    <physiologicalReaction direction="right-to-left" evidence="2">
        <dbReference type="Rhea" id="RHEA:49574"/>
    </physiologicalReaction>
</comment>
<comment type="cofactor">
    <cofactor evidence="1">
        <name>[2Fe-2S] cluster</name>
        <dbReference type="ChEBI" id="CHEBI:190135"/>
    </cofactor>
    <text evidence="1">Binds 1 [2Fe-2S] cluster.</text>
</comment>
<comment type="pathway">
    <text evidence="2">Porphyrin-containing compound metabolism; protoheme biosynthesis.</text>
</comment>
<comment type="subcellular location">
    <subcellularLocation>
        <location evidence="2">Cytoplasm</location>
    </subcellularLocation>
</comment>
<comment type="similarity">
    <text evidence="2 3">Belongs to the ferrochelatase family.</text>
</comment>
<name>CPFC_MYCTO</name>
<organism>
    <name type="scientific">Mycobacterium tuberculosis (strain CDC 1551 / Oshkosh)</name>
    <dbReference type="NCBI Taxonomy" id="83331"/>
    <lineage>
        <taxon>Bacteria</taxon>
        <taxon>Bacillati</taxon>
        <taxon>Actinomycetota</taxon>
        <taxon>Actinomycetes</taxon>
        <taxon>Mycobacteriales</taxon>
        <taxon>Mycobacteriaceae</taxon>
        <taxon>Mycobacterium</taxon>
        <taxon>Mycobacterium tuberculosis complex</taxon>
    </lineage>
</organism>
<evidence type="ECO:0000250" key="1"/>
<evidence type="ECO:0000255" key="2">
    <source>
        <dbReference type="HAMAP-Rule" id="MF_00323"/>
    </source>
</evidence>
<evidence type="ECO:0000305" key="3"/>
<feature type="chain" id="PRO_0000427142" description="Coproporphyrin III ferrochelatase">
    <location>
        <begin position="1"/>
        <end position="344"/>
    </location>
</feature>
<feature type="binding site" evidence="2">
    <location>
        <position position="52"/>
    </location>
    <ligand>
        <name>Fe-coproporphyrin III</name>
        <dbReference type="ChEBI" id="CHEBI:68438"/>
    </ligand>
</feature>
<feature type="binding site" evidence="3">
    <location>
        <position position="113"/>
    </location>
    <ligand>
        <name>[2Fe-2S] cluster</name>
        <dbReference type="ChEBI" id="CHEBI:190135"/>
    </ligand>
</feature>
<feature type="binding site" evidence="2">
    <location>
        <position position="116"/>
    </location>
    <ligand>
        <name>Fe-coproporphyrin III</name>
        <dbReference type="ChEBI" id="CHEBI:68438"/>
    </ligand>
</feature>
<feature type="binding site" evidence="2">
    <location>
        <position position="172"/>
    </location>
    <ligand>
        <name>Fe(2+)</name>
        <dbReference type="ChEBI" id="CHEBI:29033"/>
    </ligand>
</feature>
<feature type="binding site" evidence="2">
    <location>
        <position position="255"/>
    </location>
    <ligand>
        <name>Fe(2+)</name>
        <dbReference type="ChEBI" id="CHEBI:29033"/>
    </ligand>
</feature>
<feature type="binding site" evidence="3">
    <location>
        <position position="316"/>
    </location>
    <ligand>
        <name>[2Fe-2S] cluster</name>
        <dbReference type="ChEBI" id="CHEBI:190135"/>
    </ligand>
</feature>
<feature type="binding site" evidence="3">
    <location>
        <position position="325"/>
    </location>
    <ligand>
        <name>[2Fe-2S] cluster</name>
        <dbReference type="ChEBI" id="CHEBI:190135"/>
    </ligand>
</feature>
<feature type="binding site" evidence="3">
    <location>
        <position position="330"/>
    </location>
    <ligand>
        <name>[2Fe-2S] cluster</name>
        <dbReference type="ChEBI" id="CHEBI:190135"/>
    </ligand>
</feature>
<accession>P9WNE2</accession>
<accession>L0T8E3</accession>
<accession>P0A576</accession>
<accession>P71765</accession>